<comment type="function">
    <text evidence="1">DNA-binding global transcriptional regulator which is involved in the adaptive response to starvation and acts by directly or indirectly controlling the expression of numerous genes in response to nutrient availability. During rapid exponential growth, CodY is highly active and represses genes whose products allow adaptation to nutrient depletion.</text>
</comment>
<comment type="subcellular location">
    <subcellularLocation>
        <location evidence="1">Cytoplasm</location>
    </subcellularLocation>
</comment>
<comment type="similarity">
    <text evidence="1">Belongs to the CodY family.</text>
</comment>
<evidence type="ECO:0000255" key="1">
    <source>
        <dbReference type="HAMAP-Rule" id="MF_00621"/>
    </source>
</evidence>
<dbReference type="EMBL" id="AL591978">
    <property type="protein sequence ID" value="CAC99358.1"/>
    <property type="molecule type" value="Genomic_DNA"/>
</dbReference>
<dbReference type="PIR" id="AH1234">
    <property type="entry name" value="AH1234"/>
</dbReference>
<dbReference type="RefSeq" id="NP_464805.1">
    <property type="nucleotide sequence ID" value="NC_003210.1"/>
</dbReference>
<dbReference type="RefSeq" id="WP_003726695.1">
    <property type="nucleotide sequence ID" value="NZ_CP149495.1"/>
</dbReference>
<dbReference type="SMR" id="Q8Y7J7"/>
<dbReference type="STRING" id="169963.gene:17593937"/>
<dbReference type="PaxDb" id="169963-lmo1280"/>
<dbReference type="DNASU" id="985108"/>
<dbReference type="EnsemblBacteria" id="CAC99358">
    <property type="protein sequence ID" value="CAC99358"/>
    <property type="gene ID" value="CAC99358"/>
</dbReference>
<dbReference type="GeneID" id="93239154"/>
<dbReference type="GeneID" id="985108"/>
<dbReference type="KEGG" id="lmo:lmo1280"/>
<dbReference type="PATRIC" id="fig|169963.11.peg.1315"/>
<dbReference type="eggNOG" id="COG4465">
    <property type="taxonomic scope" value="Bacteria"/>
</dbReference>
<dbReference type="HOGENOM" id="CLU_089581_0_0_9"/>
<dbReference type="OrthoDB" id="2056at2"/>
<dbReference type="PhylomeDB" id="Q8Y7J7"/>
<dbReference type="BioCyc" id="LMON169963:LMO1280-MONOMER"/>
<dbReference type="Proteomes" id="UP000000817">
    <property type="component" value="Chromosome"/>
</dbReference>
<dbReference type="GO" id="GO:0005737">
    <property type="term" value="C:cytoplasm"/>
    <property type="evidence" value="ECO:0007669"/>
    <property type="project" value="UniProtKB-SubCell"/>
</dbReference>
<dbReference type="GO" id="GO:0032993">
    <property type="term" value="C:protein-DNA complex"/>
    <property type="evidence" value="ECO:0000353"/>
    <property type="project" value="CollecTF"/>
</dbReference>
<dbReference type="GO" id="GO:0001217">
    <property type="term" value="F:DNA-binding transcription repressor activity"/>
    <property type="evidence" value="ECO:0000353"/>
    <property type="project" value="CollecTF"/>
</dbReference>
<dbReference type="GO" id="GO:0005525">
    <property type="term" value="F:GTP binding"/>
    <property type="evidence" value="ECO:0007669"/>
    <property type="project" value="InterPro"/>
</dbReference>
<dbReference type="GO" id="GO:0000976">
    <property type="term" value="F:transcription cis-regulatory region binding"/>
    <property type="evidence" value="ECO:0000353"/>
    <property type="project" value="CollecTF"/>
</dbReference>
<dbReference type="GO" id="GO:0006355">
    <property type="term" value="P:regulation of DNA-templated transcription"/>
    <property type="evidence" value="ECO:0000318"/>
    <property type="project" value="GO_Central"/>
</dbReference>
<dbReference type="FunFam" id="1.10.10.10:FF:000034">
    <property type="entry name" value="GTP-sensing transcriptional pleiotropic repressor CodY"/>
    <property type="match status" value="1"/>
</dbReference>
<dbReference type="FunFam" id="3.30.450.40:FF:000003">
    <property type="entry name" value="GTP-sensing transcriptional pleiotropic repressor CodY"/>
    <property type="match status" value="1"/>
</dbReference>
<dbReference type="Gene3D" id="3.30.450.40">
    <property type="match status" value="1"/>
</dbReference>
<dbReference type="Gene3D" id="1.10.10.10">
    <property type="entry name" value="Winged helix-like DNA-binding domain superfamily/Winged helix DNA-binding domain"/>
    <property type="match status" value="1"/>
</dbReference>
<dbReference type="HAMAP" id="MF_00621">
    <property type="entry name" value="HTH_type_CodY"/>
    <property type="match status" value="1"/>
</dbReference>
<dbReference type="InterPro" id="IPR014154">
    <property type="entry name" value="CodY"/>
</dbReference>
<dbReference type="InterPro" id="IPR029016">
    <property type="entry name" value="GAF-like_dom_sf"/>
</dbReference>
<dbReference type="InterPro" id="IPR013198">
    <property type="entry name" value="GTP_trans_reg_CodY_C"/>
</dbReference>
<dbReference type="InterPro" id="IPR010312">
    <property type="entry name" value="Transc_reg_CodY_N"/>
</dbReference>
<dbReference type="InterPro" id="IPR036388">
    <property type="entry name" value="WH-like_DNA-bd_sf"/>
</dbReference>
<dbReference type="InterPro" id="IPR036390">
    <property type="entry name" value="WH_DNA-bd_sf"/>
</dbReference>
<dbReference type="NCBIfam" id="TIGR02787">
    <property type="entry name" value="codY_Gpos"/>
    <property type="match status" value="1"/>
</dbReference>
<dbReference type="NCBIfam" id="NF003170">
    <property type="entry name" value="PRK04158.1"/>
    <property type="match status" value="1"/>
</dbReference>
<dbReference type="PANTHER" id="PTHR40062:SF1">
    <property type="entry name" value="GLOBAL TRANSCRIPTIONAL REGULATOR CODY"/>
    <property type="match status" value="1"/>
</dbReference>
<dbReference type="PANTHER" id="PTHR40062">
    <property type="entry name" value="GTP-SENSING TRANSCRIPTIONAL PLEIOTROPIC REPRESSOR CODY"/>
    <property type="match status" value="1"/>
</dbReference>
<dbReference type="Pfam" id="PF06018">
    <property type="entry name" value="CodY"/>
    <property type="match status" value="1"/>
</dbReference>
<dbReference type="Pfam" id="PF08222">
    <property type="entry name" value="HTH_CodY"/>
    <property type="match status" value="1"/>
</dbReference>
<dbReference type="PIRSF" id="PIRSF011572">
    <property type="entry name" value="GTP_sensing_CodY"/>
    <property type="match status" value="1"/>
</dbReference>
<dbReference type="SUPFAM" id="SSF46785">
    <property type="entry name" value="Winged helix' DNA-binding domain"/>
    <property type="match status" value="1"/>
</dbReference>
<keyword id="KW-0963">Cytoplasm</keyword>
<keyword id="KW-0238">DNA-binding</keyword>
<keyword id="KW-1185">Reference proteome</keyword>
<keyword id="KW-0678">Repressor</keyword>
<keyword id="KW-0804">Transcription</keyword>
<keyword id="KW-0805">Transcription regulation</keyword>
<accession>Q8Y7J7</accession>
<protein>
    <recommendedName>
        <fullName evidence="1">Global transcriptional regulator CodY</fullName>
    </recommendedName>
</protein>
<sequence>MTLLEKTRKINAMLQNAAGKTVNFKEMADTLTDVIEANTYIVSRKGKLLGYSEALPIENDRMKQMLTERQFPEEYTQSLFNVGETSSNLEVSSQYTAFPIENSELFTKGLTTIVPIVGGGERLGTLILSRLESNFTDDDLLLAEYGGTVVGMEILHEKAEEIEEEARSRAVVQMAISSLSYSELEAIEHIFDELNGKEGLLVASKIADRVGITRSVIVNALRKLESAGVIDSRSLGMKGTFIRVLNDKFLVELEKLKNN</sequence>
<reference key="1">
    <citation type="journal article" date="2001" name="Science">
        <title>Comparative genomics of Listeria species.</title>
        <authorList>
            <person name="Glaser P."/>
            <person name="Frangeul L."/>
            <person name="Buchrieser C."/>
            <person name="Rusniok C."/>
            <person name="Amend A."/>
            <person name="Baquero F."/>
            <person name="Berche P."/>
            <person name="Bloecker H."/>
            <person name="Brandt P."/>
            <person name="Chakraborty T."/>
            <person name="Charbit A."/>
            <person name="Chetouani F."/>
            <person name="Couve E."/>
            <person name="de Daruvar A."/>
            <person name="Dehoux P."/>
            <person name="Domann E."/>
            <person name="Dominguez-Bernal G."/>
            <person name="Duchaud E."/>
            <person name="Durant L."/>
            <person name="Dussurget O."/>
            <person name="Entian K.-D."/>
            <person name="Fsihi H."/>
            <person name="Garcia-del Portillo F."/>
            <person name="Garrido P."/>
            <person name="Gautier L."/>
            <person name="Goebel W."/>
            <person name="Gomez-Lopez N."/>
            <person name="Hain T."/>
            <person name="Hauf J."/>
            <person name="Jackson D."/>
            <person name="Jones L.-M."/>
            <person name="Kaerst U."/>
            <person name="Kreft J."/>
            <person name="Kuhn M."/>
            <person name="Kunst F."/>
            <person name="Kurapkat G."/>
            <person name="Madueno E."/>
            <person name="Maitournam A."/>
            <person name="Mata Vicente J."/>
            <person name="Ng E."/>
            <person name="Nedjari H."/>
            <person name="Nordsiek G."/>
            <person name="Novella S."/>
            <person name="de Pablos B."/>
            <person name="Perez-Diaz J.-C."/>
            <person name="Purcell R."/>
            <person name="Remmel B."/>
            <person name="Rose M."/>
            <person name="Schlueter T."/>
            <person name="Simoes N."/>
            <person name="Tierrez A."/>
            <person name="Vazquez-Boland J.-A."/>
            <person name="Voss H."/>
            <person name="Wehland J."/>
            <person name="Cossart P."/>
        </authorList>
    </citation>
    <scope>NUCLEOTIDE SEQUENCE [LARGE SCALE GENOMIC DNA]</scope>
    <source>
        <strain>ATCC BAA-679 / EGD-e</strain>
    </source>
</reference>
<gene>
    <name evidence="1" type="primary">codY</name>
    <name type="ordered locus">lmo1280</name>
</gene>
<proteinExistence type="inferred from homology"/>
<name>CODY_LISMO</name>
<feature type="chain" id="PRO_0000213229" description="Global transcriptional regulator CodY">
    <location>
        <begin position="1"/>
        <end position="259"/>
    </location>
</feature>
<feature type="DNA-binding region" description="H-T-H motif" evidence="1">
    <location>
        <begin position="203"/>
        <end position="222"/>
    </location>
</feature>
<feature type="region of interest" description="GAF domain" evidence="1">
    <location>
        <begin position="1"/>
        <end position="155"/>
    </location>
</feature>
<organism>
    <name type="scientific">Listeria monocytogenes serovar 1/2a (strain ATCC BAA-679 / EGD-e)</name>
    <dbReference type="NCBI Taxonomy" id="169963"/>
    <lineage>
        <taxon>Bacteria</taxon>
        <taxon>Bacillati</taxon>
        <taxon>Bacillota</taxon>
        <taxon>Bacilli</taxon>
        <taxon>Bacillales</taxon>
        <taxon>Listeriaceae</taxon>
        <taxon>Listeria</taxon>
    </lineage>
</organism>